<organism>
    <name type="scientific">Homo sapiens</name>
    <name type="common">Human</name>
    <dbReference type="NCBI Taxonomy" id="9606"/>
    <lineage>
        <taxon>Eukaryota</taxon>
        <taxon>Metazoa</taxon>
        <taxon>Chordata</taxon>
        <taxon>Craniata</taxon>
        <taxon>Vertebrata</taxon>
        <taxon>Euteleostomi</taxon>
        <taxon>Mammalia</taxon>
        <taxon>Eutheria</taxon>
        <taxon>Euarchontoglires</taxon>
        <taxon>Primates</taxon>
        <taxon>Haplorrhini</taxon>
        <taxon>Catarrhini</taxon>
        <taxon>Hominidae</taxon>
        <taxon>Homo</taxon>
    </lineage>
</organism>
<sequence>MAAAPPLRDRLSFLHRLPILLKGTSDDDVPCPGYLFEEIAKISHESPGSSQCLLEYLLSRLHSSSGHGKLKVLKILLYLCSHGSSFFLLILKRNSAFIQEAAAFAGPPDPLHGNSLYQKVRAAAQDLGSTLFSDTVLPLAPSQPLGTPPATGMGSQARPHSTLQGFGYSKEHGRTAVRHQPGQAGGGWDELDSGPSSQNSSQNSDLSRVSDSGSHSGSDSHSGASREPGDLAERVEVVALSDCQQELSLVRTVTRGPRAFLSREEAQHFIKACGLLNCEAVLQLLTCHLRGTSECTQLRALCAIASLGSSDLLPQEHILLRTRPWLQELSMGSPGPVTNKATKILRHFEASCGQLSPARGTSAEPGPTAALPGPSDLLTDAVPLPGSQVFLQPLSSTPVSSRSPAPSSGMPSSPVPTPPPDASPIPAPGDPSEAEARLAESRRWRPERIPGGTDSPKRGPSSCAWSRDSLFAGMELVACPRLVGAGAAAGESCPDAPRAPQTSSQRTAAKEPPGSEPSAFAFLNA</sequence>
<dbReference type="EMBL" id="AK056090">
    <property type="protein sequence ID" value="BAB71091.1"/>
    <property type="molecule type" value="mRNA"/>
</dbReference>
<dbReference type="EMBL" id="AK127221">
    <property type="protein sequence ID" value="BAC86888.1"/>
    <property type="molecule type" value="mRNA"/>
</dbReference>
<dbReference type="EMBL" id="AK128728">
    <property type="protein sequence ID" value="BAC87593.1"/>
    <property type="molecule type" value="mRNA"/>
</dbReference>
<dbReference type="EMBL" id="BC064483">
    <property type="protein sequence ID" value="AAH64483.1"/>
    <property type="molecule type" value="mRNA"/>
</dbReference>
<dbReference type="CCDS" id="CCDS11779.1">
    <molecule id="Q96N21-1"/>
</dbReference>
<dbReference type="RefSeq" id="NP_653280.1">
    <molecule id="Q96N21-1"/>
    <property type="nucleotide sequence ID" value="NM_144679.3"/>
</dbReference>
<dbReference type="RefSeq" id="XP_006721775.1">
    <property type="nucleotide sequence ID" value="XM_006721712.2"/>
</dbReference>
<dbReference type="PDB" id="5WF9">
    <property type="method" value="X-ray"/>
    <property type="resolution" value="1.80 A"/>
    <property type="chains" value="A=1-153"/>
</dbReference>
<dbReference type="PDB" id="5WFB">
    <property type="method" value="X-ray"/>
    <property type="resolution" value="1.38 A"/>
    <property type="chains" value="A/B=1-140"/>
</dbReference>
<dbReference type="PDBsum" id="5WF9"/>
<dbReference type="PDBsum" id="5WFB"/>
<dbReference type="SMR" id="Q96N21"/>
<dbReference type="BioGRID" id="127002">
    <property type="interactions" value="174"/>
</dbReference>
<dbReference type="FunCoup" id="Q96N21">
    <property type="interactions" value="1670"/>
</dbReference>
<dbReference type="IntAct" id="Q96N21">
    <property type="interactions" value="175"/>
</dbReference>
<dbReference type="STRING" id="9606.ENSP00000490393"/>
<dbReference type="TCDB" id="9.B.278.1.5">
    <property type="family name" value="the organellar-targeting adaptor protein complex (o-apc) family"/>
</dbReference>
<dbReference type="GlyGen" id="Q96N21">
    <property type="glycosylation" value="4 sites, 1 O-linked glycan (1 site)"/>
</dbReference>
<dbReference type="iPTMnet" id="Q96N21"/>
<dbReference type="PhosphoSitePlus" id="Q96N21"/>
<dbReference type="BioMuta" id="TEPSIN"/>
<dbReference type="DMDM" id="74732479"/>
<dbReference type="jPOST" id="Q96N21"/>
<dbReference type="MassIVE" id="Q96N21"/>
<dbReference type="PaxDb" id="9606-ENSP00000300714"/>
<dbReference type="PeptideAtlas" id="Q96N21"/>
<dbReference type="ProteomicsDB" id="77454">
    <molecule id="Q96N21-1"/>
</dbReference>
<dbReference type="ProteomicsDB" id="77455">
    <molecule id="Q96N21-2"/>
</dbReference>
<dbReference type="Pumba" id="Q96N21"/>
<dbReference type="Antibodypedia" id="53274">
    <property type="antibodies" value="15 antibodies from 6 providers"/>
</dbReference>
<dbReference type="DNASU" id="146705"/>
<dbReference type="Ensembl" id="ENST00000300714.7">
    <molecule id="Q96N21-1"/>
    <property type="protein sequence ID" value="ENSP00000300714.3"/>
    <property type="gene ID" value="ENSG00000167302.11"/>
</dbReference>
<dbReference type="GeneID" id="146705"/>
<dbReference type="KEGG" id="hsa:146705"/>
<dbReference type="UCSC" id="uc002jzu.2">
    <molecule id="Q96N21-1"/>
    <property type="organism name" value="human"/>
</dbReference>
<dbReference type="AGR" id="HGNC:26458"/>
<dbReference type="CTD" id="146705"/>
<dbReference type="DisGeNET" id="146705"/>
<dbReference type="GeneCards" id="TEPSIN"/>
<dbReference type="HGNC" id="HGNC:26458">
    <property type="gene designation" value="TEPSIN"/>
</dbReference>
<dbReference type="HPA" id="ENSG00000167302">
    <property type="expression patterns" value="Low tissue specificity"/>
</dbReference>
<dbReference type="neXtProt" id="NX_Q96N21"/>
<dbReference type="OpenTargets" id="ENSG00000167302"/>
<dbReference type="PharmGKB" id="PA142672239"/>
<dbReference type="VEuPathDB" id="HostDB:ENSG00000167302"/>
<dbReference type="eggNOG" id="ENOG502QV38">
    <property type="taxonomic scope" value="Eukaryota"/>
</dbReference>
<dbReference type="GeneTree" id="ENSGT00390000015076"/>
<dbReference type="HOGENOM" id="CLU_030958_0_0_1"/>
<dbReference type="InParanoid" id="Q96N21"/>
<dbReference type="OrthoDB" id="118154at2759"/>
<dbReference type="PAN-GO" id="Q96N21">
    <property type="GO annotations" value="1 GO annotation based on evolutionary models"/>
</dbReference>
<dbReference type="PhylomeDB" id="Q96N21"/>
<dbReference type="TreeFam" id="TF331354"/>
<dbReference type="PathwayCommons" id="Q96N21"/>
<dbReference type="SignaLink" id="Q96N21"/>
<dbReference type="BioGRID-ORCS" id="146705">
    <property type="hits" value="113 hits in 1153 CRISPR screens"/>
</dbReference>
<dbReference type="ChiTaRS" id="TEPSIN">
    <property type="organism name" value="human"/>
</dbReference>
<dbReference type="GenomeRNAi" id="146705"/>
<dbReference type="Pharos" id="Q96N21">
    <property type="development level" value="Tdark"/>
</dbReference>
<dbReference type="PRO" id="PR:Q96N21"/>
<dbReference type="Proteomes" id="UP000005640">
    <property type="component" value="Chromosome 17"/>
</dbReference>
<dbReference type="RNAct" id="Q96N21">
    <property type="molecule type" value="protein"/>
</dbReference>
<dbReference type="Bgee" id="ENSG00000167302">
    <property type="expression patterns" value="Expressed in granulocyte and 145 other cell types or tissues"/>
</dbReference>
<dbReference type="ExpressionAtlas" id="Q96N21">
    <property type="expression patterns" value="baseline and differential"/>
</dbReference>
<dbReference type="GO" id="GO:0030662">
    <property type="term" value="C:coated vesicle membrane"/>
    <property type="evidence" value="ECO:0000314"/>
    <property type="project" value="UniProtKB"/>
</dbReference>
<dbReference type="GO" id="GO:0005737">
    <property type="term" value="C:cytoplasm"/>
    <property type="evidence" value="ECO:0000314"/>
    <property type="project" value="UniProtKB"/>
</dbReference>
<dbReference type="GO" id="GO:0005829">
    <property type="term" value="C:cytosol"/>
    <property type="evidence" value="ECO:0007669"/>
    <property type="project" value="UniProtKB-SubCell"/>
</dbReference>
<dbReference type="GO" id="GO:0043231">
    <property type="term" value="C:intracellular membrane-bounded organelle"/>
    <property type="evidence" value="ECO:0000314"/>
    <property type="project" value="HPA"/>
</dbReference>
<dbReference type="GO" id="GO:0031090">
    <property type="term" value="C:organelle membrane"/>
    <property type="evidence" value="ECO:0000315"/>
    <property type="project" value="UniProtKB"/>
</dbReference>
<dbReference type="GO" id="GO:0032588">
    <property type="term" value="C:trans-Golgi network membrane"/>
    <property type="evidence" value="ECO:0000314"/>
    <property type="project" value="UniProtKB"/>
</dbReference>
<dbReference type="GO" id="GO:0044877">
    <property type="term" value="F:protein-containing complex binding"/>
    <property type="evidence" value="ECO:0000314"/>
    <property type="project" value="UniProtKB"/>
</dbReference>
<dbReference type="CDD" id="cd03572">
    <property type="entry name" value="ENTH_like_Tepsin"/>
    <property type="match status" value="1"/>
</dbReference>
<dbReference type="DisProt" id="DP02404"/>
<dbReference type="FunFam" id="1.25.40.90:FF:000029">
    <property type="entry name" value="AP-4 complex accessory subunit Tepsin"/>
    <property type="match status" value="1"/>
</dbReference>
<dbReference type="Gene3D" id="1.25.40.90">
    <property type="match status" value="1"/>
</dbReference>
<dbReference type="InterPro" id="IPR013809">
    <property type="entry name" value="ENTH"/>
</dbReference>
<dbReference type="InterPro" id="IPR035802">
    <property type="entry name" value="ENTH/VHS_tepsin"/>
</dbReference>
<dbReference type="InterPro" id="IPR008942">
    <property type="entry name" value="ENTH_VHS"/>
</dbReference>
<dbReference type="InterPro" id="IPR039273">
    <property type="entry name" value="TEPSIN"/>
</dbReference>
<dbReference type="PANTHER" id="PTHR21514">
    <property type="entry name" value="AP-4 COMPLEX ACCESSORY SUBUNIT TEPSIN"/>
    <property type="match status" value="1"/>
</dbReference>
<dbReference type="PANTHER" id="PTHR21514:SF0">
    <property type="entry name" value="AP-4 COMPLEX ACCESSORY SUBUNIT TEPSIN"/>
    <property type="match status" value="1"/>
</dbReference>
<dbReference type="Pfam" id="PF01417">
    <property type="entry name" value="ENTH"/>
    <property type="match status" value="1"/>
</dbReference>
<dbReference type="SUPFAM" id="SSF48464">
    <property type="entry name" value="ENTH/VHS domain"/>
    <property type="match status" value="1"/>
</dbReference>
<keyword id="KW-0002">3D-structure</keyword>
<keyword id="KW-0025">Alternative splicing</keyword>
<keyword id="KW-0963">Cytoplasm</keyword>
<keyword id="KW-0968">Cytoplasmic vesicle</keyword>
<keyword id="KW-0333">Golgi apparatus</keyword>
<keyword id="KW-0472">Membrane</keyword>
<keyword id="KW-0597">Phosphoprotein</keyword>
<keyword id="KW-1267">Proteomics identification</keyword>
<keyword id="KW-1185">Reference proteome</keyword>
<gene>
    <name evidence="6 10" type="primary">TEPSIN</name>
    <name evidence="10" type="synonym">C17orf56</name>
    <name evidence="10" type="synonym">ENTHD2</name>
</gene>
<feature type="chain" id="PRO_0000286678" description="AP-4 complex accessory subunit Tepsin">
    <location>
        <begin position="1"/>
        <end position="525"/>
    </location>
</feature>
<feature type="domain" description="ENTH">
    <location>
        <begin position="8"/>
        <end position="141"/>
    </location>
</feature>
<feature type="region of interest" description="Disordered" evidence="1">
    <location>
        <begin position="139"/>
        <end position="229"/>
    </location>
</feature>
<feature type="region of interest" description="Disordered" evidence="1">
    <location>
        <begin position="355"/>
        <end position="465"/>
    </location>
</feature>
<feature type="region of interest" description="Interaction with AP4B1" evidence="3 4">
    <location>
        <begin position="467"/>
        <end position="477"/>
    </location>
</feature>
<feature type="region of interest" description="Disordered" evidence="1">
    <location>
        <begin position="487"/>
        <end position="525"/>
    </location>
</feature>
<feature type="region of interest" description="Interaction with AP4E1" evidence="3">
    <location>
        <begin position="515"/>
        <end position="525"/>
    </location>
</feature>
<feature type="compositionally biased region" description="Low complexity" evidence="1">
    <location>
        <begin position="193"/>
        <end position="225"/>
    </location>
</feature>
<feature type="compositionally biased region" description="Low complexity" evidence="1">
    <location>
        <begin position="393"/>
        <end position="412"/>
    </location>
</feature>
<feature type="compositionally biased region" description="Pro residues" evidence="1">
    <location>
        <begin position="413"/>
        <end position="429"/>
    </location>
</feature>
<feature type="compositionally biased region" description="Basic and acidic residues" evidence="1">
    <location>
        <begin position="434"/>
        <end position="448"/>
    </location>
</feature>
<feature type="modified residue" description="Phosphoserine" evidence="12 14">
    <location>
        <position position="333"/>
    </location>
</feature>
<feature type="modified residue" description="Phosphoserine" evidence="11 12 13 14">
    <location>
        <position position="356"/>
    </location>
</feature>
<feature type="splice variant" id="VSP_025141" description="In isoform 2." evidence="5">
    <location>
        <begin position="1"/>
        <end position="85"/>
    </location>
</feature>
<feature type="splice variant" id="VSP_025142" description="In isoform 2." evidence="5">
    <original>FFLLILKRNSAFIQEAAAFAGPPDPLHGNSLYQKVRAAAQDLGSTLFSDTVLPLAPSQPLGTPPATGMGSQARPHSTLQGFGYSKEHGRT</original>
    <variation>MGSQARPHSTLQGFGYSKEHGRTGSAGEAFLSTIQKAAEVVASAMRPGPESPSTRRLLPRGDTYQPAMMPSASHGPPTLGNLLPGAIPGPR</variation>
    <location>
        <begin position="86"/>
        <end position="175"/>
    </location>
</feature>
<feature type="mutagenesis site" description="No effect on interaction with AP4B1 in vitro." evidence="3">
    <original>R</original>
    <variation>A</variation>
    <location>
        <position position="467"/>
    </location>
</feature>
<feature type="mutagenesis site" description="No effect on interaction with AP4B1 in vitro." evidence="3">
    <original>D</original>
    <variation>A</variation>
    <location>
        <position position="468"/>
    </location>
</feature>
<feature type="mutagenesis site" description="No effect on interaction with AP4B1 in vitro." evidence="3">
    <original>S</original>
    <variation>A</variation>
    <variation>P</variation>
    <location>
        <position position="469"/>
    </location>
</feature>
<feature type="mutagenesis site" description="Loss of interaction with AP4B1 n vitro." evidence="3">
    <original>L</original>
    <variation>A</variation>
    <location>
        <position position="470"/>
    </location>
</feature>
<feature type="mutagenesis site" description="Loss of interaction with AP4B1 in vitro; when associated with S-471." evidence="4">
    <original>L</original>
    <variation>S</variation>
    <location>
        <position position="470"/>
    </location>
</feature>
<feature type="mutagenesis site" description="Loss of interaction with AP4B1 in vitro." evidence="3">
    <original>F</original>
    <variation>A</variation>
    <location>
        <position position="471"/>
    </location>
</feature>
<feature type="mutagenesis site" description="Loss of interaction with AP4B1 in vitro; when associated with S-470." evidence="4">
    <original>F</original>
    <variation>S</variation>
    <location>
        <position position="471"/>
    </location>
</feature>
<feature type="mutagenesis site" description="No effect on interaction with AP4B1 in vitro." evidence="3">
    <original>A</original>
    <variation>D</variation>
    <variation>P</variation>
    <location>
        <position position="472"/>
    </location>
</feature>
<feature type="mutagenesis site" description="No effect on interaction with AP4B1 in vitro." evidence="3">
    <original>G</original>
    <variation>A</variation>
    <location>
        <position position="473"/>
    </location>
</feature>
<feature type="mutagenesis site" description="Loss of interaction with AP4B1 in vitro; when associated with Q-474." evidence="4">
    <original>G</original>
    <variation>I</variation>
    <location>
        <position position="473"/>
    </location>
</feature>
<feature type="mutagenesis site" description="Decreased interaction with AP4B1 in vitro." evidence="3">
    <original>M</original>
    <variation>A</variation>
    <location>
        <position position="474"/>
    </location>
</feature>
<feature type="mutagenesis site" description="Decreased interaction with AP4B1 in vitro; when associated with A-476." evidence="4">
    <original>M</original>
    <variation>D</variation>
    <location>
        <position position="474"/>
    </location>
</feature>
<feature type="mutagenesis site" description="Loss of interaction with AP4B1 in vitro; when associated with I-473." evidence="4">
    <original>M</original>
    <variation>Q</variation>
    <location>
        <position position="474"/>
    </location>
</feature>
<feature type="mutagenesis site" description="No effect on interaction with AP4B1 in vitro." evidence="3">
    <original>E</original>
    <variation>A</variation>
    <location>
        <position position="475"/>
    </location>
</feature>
<feature type="mutagenesis site" description="No effect on interaction with AP4B1 in vitro. Decreased interaction with AP4B1; when associated with D-474." evidence="3 4">
    <original>L</original>
    <variation>A</variation>
    <location>
        <position position="476"/>
    </location>
</feature>
<feature type="mutagenesis site" description="Decreased interaction with AP4B1 in vitro; when associated with S-477." evidence="4">
    <original>L</original>
    <variation>S</variation>
    <location>
        <position position="476"/>
    </location>
</feature>
<feature type="mutagenesis site" description="No effect on interaction with AP4B1 in vitro." evidence="3">
    <original>V</original>
    <variation>A</variation>
    <location>
        <position position="477"/>
    </location>
</feature>
<feature type="mutagenesis site" description="Decreased interaction with AP4B1 in vitro; when associated with S-476." evidence="4">
    <original>V</original>
    <variation>S</variation>
    <location>
        <position position="477"/>
    </location>
</feature>
<feature type="mutagenesis site" description="No effect on interaction with AP4E1 in vitro." evidence="3">
    <original>E</original>
    <variation>A</variation>
    <location>
        <position position="516"/>
    </location>
</feature>
<feature type="mutagenesis site" description="No effect on interaction with AP4E1 in vitro." evidence="3">
    <original>P</original>
    <variation>A</variation>
    <location>
        <position position="517"/>
    </location>
</feature>
<feature type="mutagenesis site" description="Loss of interaction with AP4E1 in vitro." evidence="3">
    <original>S</original>
    <variation>A</variation>
    <location>
        <position position="518"/>
    </location>
</feature>
<feature type="mutagenesis site" description="Loss of interaction with AP4E1 in vitro." evidence="3">
    <original>A</original>
    <variation>D</variation>
    <location>
        <position position="519"/>
    </location>
</feature>
<feature type="mutagenesis site" description="Loss of interaction with AP4E1 in vitro." evidence="3">
    <original>F</original>
    <variation>A</variation>
    <location>
        <position position="520"/>
    </location>
</feature>
<feature type="mutagenesis site" description="No effect on interaction with AP4E1 in vitro." evidence="3">
    <original>A</original>
    <variation>D</variation>
    <location>
        <position position="521"/>
    </location>
</feature>
<feature type="mutagenesis site" description="Loss of interaction with AP4E1 in vitro." evidence="3">
    <original>F</original>
    <variation>A</variation>
    <location>
        <position position="522"/>
    </location>
</feature>
<feature type="mutagenesis site" description="Loss of interaction with AP4E1 in vitro." evidence="3">
    <original>L</original>
    <variation>A</variation>
    <location>
        <position position="523"/>
    </location>
</feature>
<feature type="mutagenesis site" description="Decreased interaction with AP4E1 in vitro." evidence="3">
    <original>N</original>
    <variation>A</variation>
    <location>
        <position position="524"/>
    </location>
</feature>
<feature type="mutagenesis site" description="No effect on interaction with AP4E1 in vitro." evidence="3">
    <original>A</original>
    <variation>D</variation>
    <location>
        <position position="525"/>
    </location>
</feature>
<feature type="helix" evidence="15">
    <location>
        <begin position="7"/>
        <end position="24"/>
    </location>
</feature>
<feature type="strand" evidence="15">
    <location>
        <begin position="26"/>
        <end position="29"/>
    </location>
</feature>
<feature type="helix" evidence="15">
    <location>
        <begin position="35"/>
        <end position="45"/>
    </location>
</feature>
<feature type="helix" evidence="15">
    <location>
        <begin position="47"/>
        <end position="63"/>
    </location>
</feature>
<feature type="helix" evidence="15">
    <location>
        <begin position="66"/>
        <end position="82"/>
    </location>
</feature>
<feature type="helix" evidence="15">
    <location>
        <begin position="85"/>
        <end position="93"/>
    </location>
</feature>
<feature type="helix" evidence="15">
    <location>
        <begin position="95"/>
        <end position="102"/>
    </location>
</feature>
<feature type="turn" evidence="15">
    <location>
        <begin position="110"/>
        <end position="112"/>
    </location>
</feature>
<feature type="helix" evidence="15">
    <location>
        <begin position="115"/>
        <end position="131"/>
    </location>
</feature>
<feature type="sequence conflict" description="In Ref. 1; BAC87593." evidence="7" ref="1">
    <original>R</original>
    <variation>H</variation>
    <location sequence="Q96N21-2">
        <position position="22"/>
    </location>
</feature>
<evidence type="ECO:0000256" key="1">
    <source>
        <dbReference type="SAM" id="MobiDB-lite"/>
    </source>
</evidence>
<evidence type="ECO:0000269" key="2">
    <source>
    </source>
</evidence>
<evidence type="ECO:0000269" key="3">
    <source>
    </source>
</evidence>
<evidence type="ECO:0000269" key="4">
    <source>
    </source>
</evidence>
<evidence type="ECO:0000303" key="5">
    <source>
    </source>
</evidence>
<evidence type="ECO:0000303" key="6">
    <source>
    </source>
</evidence>
<evidence type="ECO:0000305" key="7"/>
<evidence type="ECO:0000305" key="8">
    <source>
    </source>
</evidence>
<evidence type="ECO:0000305" key="9">
    <source>
    </source>
</evidence>
<evidence type="ECO:0000312" key="10">
    <source>
        <dbReference type="HGNC" id="HGNC:26458"/>
    </source>
</evidence>
<evidence type="ECO:0007744" key="11">
    <source>
    </source>
</evidence>
<evidence type="ECO:0007744" key="12">
    <source>
    </source>
</evidence>
<evidence type="ECO:0007744" key="13">
    <source>
    </source>
</evidence>
<evidence type="ECO:0007744" key="14">
    <source>
    </source>
</evidence>
<evidence type="ECO:0007829" key="15">
    <source>
        <dbReference type="PDB" id="5WFB"/>
    </source>
</evidence>
<protein>
    <recommendedName>
        <fullName evidence="7">AP-4 complex accessory subunit Tepsin</fullName>
    </recommendedName>
    <alternativeName>
        <fullName evidence="10">ENTH domain-containing protein 2</fullName>
    </alternativeName>
    <alternativeName>
        <fullName>Epsin for AP-4</fullName>
    </alternativeName>
    <alternativeName>
        <fullName evidence="6">Tetra-epsin</fullName>
    </alternativeName>
</protein>
<reference key="1">
    <citation type="journal article" date="2004" name="Nat. Genet.">
        <title>Complete sequencing and characterization of 21,243 full-length human cDNAs.</title>
        <authorList>
            <person name="Ota T."/>
            <person name="Suzuki Y."/>
            <person name="Nishikawa T."/>
            <person name="Otsuki T."/>
            <person name="Sugiyama T."/>
            <person name="Irie R."/>
            <person name="Wakamatsu A."/>
            <person name="Hayashi K."/>
            <person name="Sato H."/>
            <person name="Nagai K."/>
            <person name="Kimura K."/>
            <person name="Makita H."/>
            <person name="Sekine M."/>
            <person name="Obayashi M."/>
            <person name="Nishi T."/>
            <person name="Shibahara T."/>
            <person name="Tanaka T."/>
            <person name="Ishii S."/>
            <person name="Yamamoto J."/>
            <person name="Saito K."/>
            <person name="Kawai Y."/>
            <person name="Isono Y."/>
            <person name="Nakamura Y."/>
            <person name="Nagahari K."/>
            <person name="Murakami K."/>
            <person name="Yasuda T."/>
            <person name="Iwayanagi T."/>
            <person name="Wagatsuma M."/>
            <person name="Shiratori A."/>
            <person name="Sudo H."/>
            <person name="Hosoiri T."/>
            <person name="Kaku Y."/>
            <person name="Kodaira H."/>
            <person name="Kondo H."/>
            <person name="Sugawara M."/>
            <person name="Takahashi M."/>
            <person name="Kanda K."/>
            <person name="Yokoi T."/>
            <person name="Furuya T."/>
            <person name="Kikkawa E."/>
            <person name="Omura Y."/>
            <person name="Abe K."/>
            <person name="Kamihara K."/>
            <person name="Katsuta N."/>
            <person name="Sato K."/>
            <person name="Tanikawa M."/>
            <person name="Yamazaki M."/>
            <person name="Ninomiya K."/>
            <person name="Ishibashi T."/>
            <person name="Yamashita H."/>
            <person name="Murakawa K."/>
            <person name="Fujimori K."/>
            <person name="Tanai H."/>
            <person name="Kimata M."/>
            <person name="Watanabe M."/>
            <person name="Hiraoka S."/>
            <person name="Chiba Y."/>
            <person name="Ishida S."/>
            <person name="Ono Y."/>
            <person name="Takiguchi S."/>
            <person name="Watanabe S."/>
            <person name="Yosida M."/>
            <person name="Hotuta T."/>
            <person name="Kusano J."/>
            <person name="Kanehori K."/>
            <person name="Takahashi-Fujii A."/>
            <person name="Hara H."/>
            <person name="Tanase T.-O."/>
            <person name="Nomura Y."/>
            <person name="Togiya S."/>
            <person name="Komai F."/>
            <person name="Hara R."/>
            <person name="Takeuchi K."/>
            <person name="Arita M."/>
            <person name="Imose N."/>
            <person name="Musashino K."/>
            <person name="Yuuki H."/>
            <person name="Oshima A."/>
            <person name="Sasaki N."/>
            <person name="Aotsuka S."/>
            <person name="Yoshikawa Y."/>
            <person name="Matsunawa H."/>
            <person name="Ichihara T."/>
            <person name="Shiohata N."/>
            <person name="Sano S."/>
            <person name="Moriya S."/>
            <person name="Momiyama H."/>
            <person name="Satoh N."/>
            <person name="Takami S."/>
            <person name="Terashima Y."/>
            <person name="Suzuki O."/>
            <person name="Nakagawa S."/>
            <person name="Senoh A."/>
            <person name="Mizoguchi H."/>
            <person name="Goto Y."/>
            <person name="Shimizu F."/>
            <person name="Wakebe H."/>
            <person name="Hishigaki H."/>
            <person name="Watanabe T."/>
            <person name="Sugiyama A."/>
            <person name="Takemoto M."/>
            <person name="Kawakami B."/>
            <person name="Yamazaki M."/>
            <person name="Watanabe K."/>
            <person name="Kumagai A."/>
            <person name="Itakura S."/>
            <person name="Fukuzumi Y."/>
            <person name="Fujimori Y."/>
            <person name="Komiyama M."/>
            <person name="Tashiro H."/>
            <person name="Tanigami A."/>
            <person name="Fujiwara T."/>
            <person name="Ono T."/>
            <person name="Yamada K."/>
            <person name="Fujii Y."/>
            <person name="Ozaki K."/>
            <person name="Hirao M."/>
            <person name="Ohmori Y."/>
            <person name="Kawabata A."/>
            <person name="Hikiji T."/>
            <person name="Kobatake N."/>
            <person name="Inagaki H."/>
            <person name="Ikema Y."/>
            <person name="Okamoto S."/>
            <person name="Okitani R."/>
            <person name="Kawakami T."/>
            <person name="Noguchi S."/>
            <person name="Itoh T."/>
            <person name="Shigeta K."/>
            <person name="Senba T."/>
            <person name="Matsumura K."/>
            <person name="Nakajima Y."/>
            <person name="Mizuno T."/>
            <person name="Morinaga M."/>
            <person name="Sasaki M."/>
            <person name="Togashi T."/>
            <person name="Oyama M."/>
            <person name="Hata H."/>
            <person name="Watanabe M."/>
            <person name="Komatsu T."/>
            <person name="Mizushima-Sugano J."/>
            <person name="Satoh T."/>
            <person name="Shirai Y."/>
            <person name="Takahashi Y."/>
            <person name="Nakagawa K."/>
            <person name="Okumura K."/>
            <person name="Nagase T."/>
            <person name="Nomura N."/>
            <person name="Kikuchi H."/>
            <person name="Masuho Y."/>
            <person name="Yamashita R."/>
            <person name="Nakai K."/>
            <person name="Yada T."/>
            <person name="Nakamura Y."/>
            <person name="Ohara O."/>
            <person name="Isogai T."/>
            <person name="Sugano S."/>
        </authorList>
    </citation>
    <scope>NUCLEOTIDE SEQUENCE [LARGE SCALE MRNA] (ISOFORMS 1 AND 2)</scope>
    <source>
        <tissue>Hippocampus</tissue>
        <tissue>Teratocarcinoma</tissue>
        <tissue>Uterus</tissue>
    </source>
</reference>
<reference key="2">
    <citation type="journal article" date="2004" name="Genome Res.">
        <title>The status, quality, and expansion of the NIH full-length cDNA project: the Mammalian Gene Collection (MGC).</title>
        <authorList>
            <consortium name="The MGC Project Team"/>
        </authorList>
    </citation>
    <scope>NUCLEOTIDE SEQUENCE [LARGE SCALE MRNA] (ISOFORM 1)</scope>
    <source>
        <tissue>Brain</tissue>
    </source>
</reference>
<reference key="3">
    <citation type="journal article" date="2008" name="J. Proteome Res.">
        <title>Combining protein-based IMAC, peptide-based IMAC, and MudPIT for efficient phosphoproteomic analysis.</title>
        <authorList>
            <person name="Cantin G.T."/>
            <person name="Yi W."/>
            <person name="Lu B."/>
            <person name="Park S.K."/>
            <person name="Xu T."/>
            <person name="Lee J.-D."/>
            <person name="Yates J.R. III"/>
        </authorList>
    </citation>
    <scope>PHOSPHORYLATION [LARGE SCALE ANALYSIS] AT SER-356</scope>
    <scope>IDENTIFICATION BY MASS SPECTROMETRY [LARGE SCALE ANALYSIS]</scope>
    <source>
        <tissue>Cervix carcinoma</tissue>
    </source>
</reference>
<reference key="4">
    <citation type="journal article" date="2008" name="Mol. Cell">
        <title>Kinase-selective enrichment enables quantitative phosphoproteomics of the kinome across the cell cycle.</title>
        <authorList>
            <person name="Daub H."/>
            <person name="Olsen J.V."/>
            <person name="Bairlein M."/>
            <person name="Gnad F."/>
            <person name="Oppermann F.S."/>
            <person name="Korner R."/>
            <person name="Greff Z."/>
            <person name="Keri G."/>
            <person name="Stemmann O."/>
            <person name="Mann M."/>
        </authorList>
    </citation>
    <scope>PHOSPHORYLATION [LARGE SCALE ANALYSIS] AT SER-333 AND SER-356</scope>
    <scope>IDENTIFICATION BY MASS SPECTROMETRY [LARGE SCALE ANALYSIS]</scope>
    <source>
        <tissue>Cervix carcinoma</tissue>
    </source>
</reference>
<reference key="5">
    <citation type="journal article" date="2010" name="Sci. Signal.">
        <title>Quantitative phosphoproteomics reveals widespread full phosphorylation site occupancy during mitosis.</title>
        <authorList>
            <person name="Olsen J.V."/>
            <person name="Vermeulen M."/>
            <person name="Santamaria A."/>
            <person name="Kumar C."/>
            <person name="Miller M.L."/>
            <person name="Jensen L.J."/>
            <person name="Gnad F."/>
            <person name="Cox J."/>
            <person name="Jensen T.S."/>
            <person name="Nigg E.A."/>
            <person name="Brunak S."/>
            <person name="Mann M."/>
        </authorList>
    </citation>
    <scope>PHOSPHORYLATION [LARGE SCALE ANALYSIS] AT SER-356</scope>
    <scope>IDENTIFICATION BY MASS SPECTROMETRY [LARGE SCALE ANALYSIS]</scope>
    <source>
        <tissue>Cervix carcinoma</tissue>
    </source>
</reference>
<reference key="6">
    <citation type="journal article" date="2012" name="J. Cell Biol.">
        <title>Multivariate proteomic profiling identifies novel accessory proteins of coated vesicles.</title>
        <authorList>
            <person name="Borner G.H."/>
            <person name="Antrobus R."/>
            <person name="Hirst J."/>
            <person name="Bhumbra G.S."/>
            <person name="Kozik P."/>
            <person name="Jackson L.P."/>
            <person name="Sahlender D.A."/>
            <person name="Robinson M.S."/>
        </authorList>
    </citation>
    <scope>FUNCTION</scope>
    <scope>INTERACTION WITH AP4B1</scope>
    <scope>SUBUNIT</scope>
    <scope>SUBCELLULAR LOCATION</scope>
    <scope>TOPOLOGY</scope>
</reference>
<reference key="7">
    <citation type="journal article" date="2013" name="J. Proteome Res.">
        <title>Toward a comprehensive characterization of a human cancer cell phosphoproteome.</title>
        <authorList>
            <person name="Zhou H."/>
            <person name="Di Palma S."/>
            <person name="Preisinger C."/>
            <person name="Peng M."/>
            <person name="Polat A.N."/>
            <person name="Heck A.J."/>
            <person name="Mohammed S."/>
        </authorList>
    </citation>
    <scope>PHOSPHORYLATION [LARGE SCALE ANALYSIS] AT SER-333 AND SER-356</scope>
    <scope>IDENTIFICATION BY MASS SPECTROMETRY [LARGE SCALE ANALYSIS]</scope>
    <source>
        <tissue>Cervix carcinoma</tissue>
        <tissue>Erythroleukemia</tissue>
    </source>
</reference>
<reference key="8">
    <citation type="journal article" date="2015" name="J. Biol. Chem.">
        <title>Bivalent motif-ear interactions mediate the association of the accessory protein tepsin with the AP-4 adaptor complex.</title>
        <authorList>
            <person name="Mattera R."/>
            <person name="Guardia C.M."/>
            <person name="Sidhu S.S."/>
            <person name="Bonifacino J.S."/>
        </authorList>
    </citation>
    <scope>FUNCTION</scope>
    <scope>INTERACTION WITH AP4B1 AND AP4E1</scope>
    <scope>SUBCELLULAR LOCATION</scope>
    <scope>REGION</scope>
    <scope>MUTAGENESIS OF ARG-467; ASP-468; SER-469; LEU-470; PHE-471; ALA-472; GLY-473; MET-474; GLU-475; LEU-476; VAL-477; GLU-516; PRO-517; SER-518; ALA-519; PHE-520; ALA-521; PHE-522; LEU-523; ASN-524 AND ALA-525</scope>
</reference>
<reference key="9">
    <citation type="journal article" date="2016" name="Traffic">
        <title>Molecular basis for the interaction between AP4 beta4 and its accessory protein, tepsin.</title>
        <authorList>
            <person name="Frazier M.N."/>
            <person name="Davies A.K."/>
            <person name="Voehler M."/>
            <person name="Kendall A.K."/>
            <person name="Borner G.H."/>
            <person name="Chazin W.J."/>
            <person name="Robinson M.S."/>
            <person name="Jackson L.P."/>
        </authorList>
    </citation>
    <scope>INTERACTION WITH AP4B1</scope>
    <scope>SUBCELLULAR LOCATION</scope>
    <scope>TOPOLOGY</scope>
    <scope>REGION</scope>
    <scope>MUTAGENESIS OF LEU-470; PHE-471; GLY-473; MET-474; LEU-476 AND VAL-477</scope>
</reference>
<comment type="function">
    <text evidence="8 9">Associates with the adapter-like complex 4 (AP-4) and may therefore play a role in vesicular trafficking of proteins at the trans-Golgi network.</text>
</comment>
<comment type="subunit">
    <text evidence="2 3 4">Interacts with AP4B1 and AP4E1; the interaction is direct and mediates the association of TEPSIN with the adapter-like complex 4 (AP-4), a heterotetramer composed of AP4B1, AP4E1, AP4M1 and AP4S1.</text>
</comment>
<comment type="interaction">
    <interactant intactId="EBI-11139477">
        <id>Q96N21</id>
    </interactant>
    <interactant intactId="EBI-2008380">
        <id>Q6ZMQ8</id>
        <label>AATK</label>
    </interactant>
    <organismsDiffer>false</organismsDiffer>
    <experiments>3</experiments>
</comment>
<comment type="interaction">
    <interactant intactId="EBI-11139477">
        <id>Q96N21</id>
    </interactant>
    <interactant intactId="EBI-18657673">
        <id>Q8N6N7</id>
        <label>ACBD7</label>
    </interactant>
    <organismsDiffer>false</organismsDiffer>
    <experiments>3</experiments>
</comment>
<comment type="interaction">
    <interactant intactId="EBI-11139477">
        <id>Q96N21</id>
    </interactant>
    <interactant intactId="EBI-17740588">
        <id>O00468-6</id>
        <label>AGRN</label>
    </interactant>
    <organismsDiffer>false</organismsDiffer>
    <experiments>3</experiments>
</comment>
<comment type="interaction">
    <interactant intactId="EBI-11139477">
        <id>Q96N21</id>
    </interactant>
    <interactant intactId="EBI-8643161">
        <id>Q9NX04</id>
        <label>AIRIM</label>
    </interactant>
    <organismsDiffer>false</organismsDiffer>
    <experiments>3</experiments>
</comment>
<comment type="interaction">
    <interactant intactId="EBI-11139477">
        <id>Q96N21</id>
    </interactant>
    <interactant intactId="EBI-541426">
        <id>Q9BXS5</id>
        <label>AP1M1</label>
    </interactant>
    <organismsDiffer>false</organismsDiffer>
    <experiments>3</experiments>
</comment>
<comment type="interaction">
    <interactant intactId="EBI-11139477">
        <id>Q96N21</id>
    </interactant>
    <interactant intactId="EBI-1047606">
        <id>Q9Y6B7</id>
        <label>AP4B1</label>
    </interactant>
    <organismsDiffer>false</organismsDiffer>
    <experiments>8</experiments>
</comment>
<comment type="interaction">
    <interactant intactId="EBI-11139477">
        <id>Q96N21</id>
    </interactant>
    <interactant intactId="EBI-1222435">
        <id>Q9UPM8</id>
        <label>AP4E1</label>
    </interactant>
    <organismsDiffer>false</organismsDiffer>
    <experiments>7</experiments>
</comment>
<comment type="interaction">
    <interactant intactId="EBI-11139477">
        <id>Q96N21</id>
    </interactant>
    <interactant intactId="EBI-3914106">
        <id>O00189</id>
        <label>AP4M1</label>
    </interactant>
    <organismsDiffer>false</organismsDiffer>
    <experiments>6</experiments>
</comment>
<comment type="interaction">
    <interactant intactId="EBI-11139477">
        <id>Q96N21</id>
    </interactant>
    <interactant intactId="EBI-11574440">
        <id>Q9BWW8</id>
        <label>APOL6</label>
    </interactant>
    <organismsDiffer>false</organismsDiffer>
    <experiments>3</experiments>
</comment>
<comment type="interaction">
    <interactant intactId="EBI-11139477">
        <id>Q96N21</id>
    </interactant>
    <interactant intactId="EBI-2609717">
        <id>Q8TDY4</id>
        <label>ASAP3</label>
    </interactant>
    <organismsDiffer>false</organismsDiffer>
    <experiments>3</experiments>
</comment>
<comment type="interaction">
    <interactant intactId="EBI-11139477">
        <id>Q96N21</id>
    </interactant>
    <interactant intactId="EBI-14199987">
        <id>Q9Y575-3</id>
        <label>ASB3</label>
    </interactant>
    <organismsDiffer>false</organismsDiffer>
    <experiments>3</experiments>
</comment>
<comment type="interaction">
    <interactant intactId="EBI-11139477">
        <id>Q96N21</id>
    </interactant>
    <interactant intactId="EBI-745689">
        <id>Q7L5A3</id>
        <label>ATOSB</label>
    </interactant>
    <organismsDiffer>false</organismsDiffer>
    <experiments>3</experiments>
</comment>
<comment type="interaction">
    <interactant intactId="EBI-11139477">
        <id>Q96N21</id>
    </interactant>
    <interactant intactId="EBI-1385773">
        <id>Q9BZR8</id>
        <label>BCL2L14</label>
    </interactant>
    <organismsDiffer>false</organismsDiffer>
    <experiments>3</experiments>
</comment>
<comment type="interaction">
    <interactant intactId="EBI-11139477">
        <id>Q96N21</id>
    </interactant>
    <interactant intactId="EBI-10247136">
        <id>Q5TBC7</id>
        <label>BCL2L15</label>
    </interactant>
    <organismsDiffer>false</organismsDiffer>
    <experiments>3</experiments>
</comment>
<comment type="interaction">
    <interactant intactId="EBI-11139477">
        <id>Q96N21</id>
    </interactant>
    <interactant intactId="EBI-517623">
        <id>Q96CA5</id>
        <label>BIRC7</label>
    </interactant>
    <organismsDiffer>false</organismsDiffer>
    <experiments>3</experiments>
</comment>
<comment type="interaction">
    <interactant intactId="EBI-11139477">
        <id>Q96N21</id>
    </interactant>
    <interactant intactId="EBI-953896">
        <id>Q9NP55</id>
        <label>BPIFA1</label>
    </interactant>
    <organismsDiffer>false</organismsDiffer>
    <experiments>3</experiments>
</comment>
<comment type="interaction">
    <interactant intactId="EBI-11139477">
        <id>Q96N21</id>
    </interactant>
    <interactant intactId="EBI-311155">
        <id>Q9Y2F9</id>
        <label>BTBD3</label>
    </interactant>
    <organismsDiffer>false</organismsDiffer>
    <experiments>3</experiments>
</comment>
<comment type="interaction">
    <interactant intactId="EBI-11139477">
        <id>Q96N21</id>
    </interactant>
    <interactant intactId="EBI-11955105">
        <id>Q9BXJ3</id>
        <label>C1QTNF4</label>
    </interactant>
    <organismsDiffer>false</organismsDiffer>
    <experiments>3</experiments>
</comment>
<comment type="interaction">
    <interactant intactId="EBI-11139477">
        <id>Q96N21</id>
    </interactant>
    <interactant intactId="EBI-712912">
        <id>Q9HC52</id>
        <label>CBX8</label>
    </interactant>
    <organismsDiffer>false</organismsDiffer>
    <experiments>3</experiments>
</comment>
<comment type="interaction">
    <interactant intactId="EBI-11139477">
        <id>Q96N21</id>
    </interactant>
    <interactant intactId="EBI-10749669">
        <id>Q8IYE0</id>
        <label>CCDC146</label>
    </interactant>
    <organismsDiffer>false</organismsDiffer>
    <experiments>3</experiments>
</comment>
<comment type="interaction">
    <interactant intactId="EBI-11139477">
        <id>Q96N21</id>
    </interactant>
    <interactant intactId="EBI-395261">
        <id>P24863</id>
        <label>CCNC</label>
    </interactant>
    <organismsDiffer>false</organismsDiffer>
    <experiments>3</experiments>
</comment>
<comment type="interaction">
    <interactant intactId="EBI-11139477">
        <id>Q96N21</id>
    </interactant>
    <interactant intactId="EBI-396137">
        <id>Q9UJX2</id>
        <label>CDC23</label>
    </interactant>
    <organismsDiffer>false</organismsDiffer>
    <experiments>3</experiments>
</comment>
<comment type="interaction">
    <interactant intactId="EBI-11139477">
        <id>Q96N21</id>
    </interactant>
    <interactant intactId="EBI-739784">
        <id>Q9BW66</id>
        <label>CINP</label>
    </interactant>
    <organismsDiffer>false</organismsDiffer>
    <experiments>3</experiments>
</comment>
<comment type="interaction">
    <interactant intactId="EBI-11139477">
        <id>Q96N21</id>
    </interactant>
    <interactant intactId="EBI-11980535">
        <id>P51800-3</id>
        <label>CLCNKA</label>
    </interactant>
    <organismsDiffer>false</organismsDiffer>
    <experiments>3</experiments>
</comment>
<comment type="interaction">
    <interactant intactId="EBI-11139477">
        <id>Q96N21</id>
    </interactant>
    <interactant intactId="EBI-10192241">
        <id>O95833</id>
        <label>CLIC3</label>
    </interactant>
    <organismsDiffer>false</organismsDiffer>
    <experiments>3</experiments>
</comment>
<comment type="interaction">
    <interactant intactId="EBI-11139477">
        <id>Q96N21</id>
    </interactant>
    <interactant intactId="EBI-1050897">
        <id>P26441</id>
        <label>CNTF</label>
    </interactant>
    <organismsDiffer>false</organismsDiffer>
    <experiments>3</experiments>
</comment>
<comment type="interaction">
    <interactant intactId="EBI-11139477">
        <id>Q96N21</id>
    </interactant>
    <interactant intactId="EBI-12012272">
        <id>Q9UBL6-2</id>
        <label>CPNE7</label>
    </interactant>
    <organismsDiffer>false</organismsDiffer>
    <experiments>3</experiments>
</comment>
<comment type="interaction">
    <interactant intactId="EBI-11139477">
        <id>Q96N21</id>
    </interactant>
    <interactant intactId="EBI-347804">
        <id>P68400</id>
        <label>CSNK2A1</label>
    </interactant>
    <organismsDiffer>false</organismsDiffer>
    <experiments>3</experiments>
</comment>
<comment type="interaction">
    <interactant intactId="EBI-11139477">
        <id>Q96N21</id>
    </interactant>
    <interactant intactId="EBI-1188472">
        <id>P78358</id>
        <label>CTAG1B</label>
    </interactant>
    <organismsDiffer>false</organismsDiffer>
    <experiments>3</experiments>
</comment>
<comment type="interaction">
    <interactant intactId="EBI-11139477">
        <id>Q96N21</id>
    </interactant>
    <interactant intactId="EBI-3867333">
        <id>A8MQ03</id>
        <label>CYSRT1</label>
    </interactant>
    <organismsDiffer>false</organismsDiffer>
    <experiments>3</experiments>
</comment>
<comment type="interaction">
    <interactant intactId="EBI-11139477">
        <id>Q96N21</id>
    </interactant>
    <interactant intactId="EBI-745369">
        <id>Q9H4E7</id>
        <label>DEF6</label>
    </interactant>
    <organismsDiffer>false</organismsDiffer>
    <experiments>3</experiments>
</comment>
<comment type="interaction">
    <interactant intactId="EBI-11139477">
        <id>Q96N21</id>
    </interactant>
    <interactant intactId="EBI-1054321">
        <id>Q68J44</id>
        <label>DUSP29</label>
    </interactant>
    <organismsDiffer>false</organismsDiffer>
    <experiments>3</experiments>
</comment>
<comment type="interaction">
    <interactant intactId="EBI-11139477">
        <id>Q96N21</id>
    </interactant>
    <interactant intactId="EBI-6591081">
        <id>Q13115</id>
        <label>DUSP4</label>
    </interactant>
    <organismsDiffer>false</organismsDiffer>
    <experiments>3</experiments>
</comment>
<comment type="interaction">
    <interactant intactId="EBI-11139477">
        <id>Q96N21</id>
    </interactant>
    <interactant intactId="EBI-10264440">
        <id>Q8IYY4</id>
        <label>DZIP1L</label>
    </interactant>
    <organismsDiffer>false</organismsDiffer>
    <experiments>3</experiments>
</comment>
<comment type="interaction">
    <interactant intactId="EBI-11139477">
        <id>Q96N21</id>
    </interactant>
    <interactant intactId="EBI-750700">
        <id>Q8N9N8</id>
        <label>EIF1AD</label>
    </interactant>
    <organismsDiffer>false</organismsDiffer>
    <experiments>3</experiments>
</comment>
<comment type="interaction">
    <interactant intactId="EBI-11139477">
        <id>Q96N21</id>
    </interactant>
    <interactant intactId="EBI-6658203">
        <id>Q86YD7</id>
        <label>FAM90A1</label>
    </interactant>
    <organismsDiffer>false</organismsDiffer>
    <experiments>3</experiments>
</comment>
<comment type="interaction">
    <interactant intactId="EBI-11139477">
        <id>Q96N21</id>
    </interactant>
    <interactant intactId="EBI-2513774">
        <id>O95363</id>
        <label>FARS2</label>
    </interactant>
    <organismsDiffer>false</organismsDiffer>
    <experiments>3</experiments>
</comment>
<comment type="interaction">
    <interactant intactId="EBI-11139477">
        <id>Q96N21</id>
    </interactant>
    <interactant intactId="EBI-744771">
        <id>O75344</id>
        <label>FKBP6</label>
    </interactant>
    <organismsDiffer>false</organismsDiffer>
    <experiments>3</experiments>
</comment>
<comment type="interaction">
    <interactant intactId="EBI-11139477">
        <id>Q96N21</id>
    </interactant>
    <interactant intactId="EBI-11533409">
        <id>Q96Q35-2</id>
        <label>FLACC1</label>
    </interactant>
    <organismsDiffer>false</organismsDiffer>
    <experiments>3</experiments>
</comment>
<comment type="interaction">
    <interactant intactId="EBI-11139477">
        <id>Q96N21</id>
    </interactant>
    <interactant intactId="EBI-10242151">
        <id>Q53EP0-3</id>
        <label>FNDC3B</label>
    </interactant>
    <organismsDiffer>false</organismsDiffer>
    <experiments>3</experiments>
</comment>
<comment type="interaction">
    <interactant intactId="EBI-11139477">
        <id>Q96N21</id>
    </interactant>
    <interactant intactId="EBI-11427343">
        <id>Q9P2W3</id>
        <label>GNG13</label>
    </interactant>
    <organismsDiffer>false</organismsDiffer>
    <experiments>3</experiments>
</comment>
<comment type="interaction">
    <interactant intactId="EBI-11139477">
        <id>Q96N21</id>
    </interactant>
    <interactant intactId="EBI-618309">
        <id>Q08379</id>
        <label>GOLGA2</label>
    </interactant>
    <organismsDiffer>false</organismsDiffer>
    <experiments>3</experiments>
</comment>
<comment type="interaction">
    <interactant intactId="EBI-11139477">
        <id>Q96N21</id>
    </interactant>
    <interactant intactId="EBI-751540">
        <id>O95872</id>
        <label>GPANK1</label>
    </interactant>
    <organismsDiffer>false</organismsDiffer>
    <experiments>3</experiments>
</comment>
<comment type="interaction">
    <interactant intactId="EBI-11139477">
        <id>Q96N21</id>
    </interactant>
    <interactant intactId="EBI-11519926">
        <id>Q6PI77</id>
        <label>GPRASP3</label>
    </interactant>
    <organismsDiffer>false</organismsDiffer>
    <experiments>3</experiments>
</comment>
<comment type="interaction">
    <interactant intactId="EBI-11139477">
        <id>Q96N21</id>
    </interactant>
    <interactant intactId="EBI-12353035">
        <id>Q13322-4</id>
        <label>GRB10</label>
    </interactant>
    <organismsDiffer>false</organismsDiffer>
    <experiments>3</experiments>
</comment>
<comment type="interaction">
    <interactant intactId="EBI-11139477">
        <id>Q96N21</id>
    </interactant>
    <interactant intactId="EBI-717919">
        <id>Q4V328</id>
        <label>GRIPAP1</label>
    </interactant>
    <organismsDiffer>false</organismsDiffer>
    <experiments>3</experiments>
</comment>
<comment type="interaction">
    <interactant intactId="EBI-11139477">
        <id>Q96N21</id>
    </interactant>
    <interactant intactId="EBI-11978177">
        <id>Q96NT3-2</id>
        <label>GUCD1</label>
    </interactant>
    <organismsDiffer>false</organismsDiffer>
    <experiments>3</experiments>
</comment>
<comment type="interaction">
    <interactant intactId="EBI-11139477">
        <id>Q96N21</id>
    </interactant>
    <interactant intactId="EBI-2339359">
        <id>O14929</id>
        <label>HAT1</label>
    </interactant>
    <organismsDiffer>false</organismsDiffer>
    <experiments>3</experiments>
</comment>
<comment type="interaction">
    <interactant intactId="EBI-11139477">
        <id>Q96N21</id>
    </interactant>
    <interactant intactId="EBI-9834454">
        <id>P08631-2</id>
        <label>HCK</label>
    </interactant>
    <organismsDiffer>false</organismsDiffer>
    <experiments>3</experiments>
</comment>
<comment type="interaction">
    <interactant intactId="EBI-11139477">
        <id>Q96N21</id>
    </interactant>
    <interactant intactId="EBI-12197079">
        <id>P84074</id>
        <label>HPCA</label>
    </interactant>
    <organismsDiffer>false</organismsDiffer>
    <experiments>3</experiments>
</comment>
<comment type="interaction">
    <interactant intactId="EBI-11139477">
        <id>Q96N21</id>
    </interactant>
    <interactant intactId="EBI-7116203">
        <id>O75031</id>
        <label>HSF2BP</label>
    </interactant>
    <organismsDiffer>false</organismsDiffer>
    <experiments>3</experiments>
</comment>
<comment type="interaction">
    <interactant intactId="EBI-11139477">
        <id>Q96N21</id>
    </interactant>
    <interactant intactId="EBI-739361">
        <id>Q9UBY9</id>
        <label>HSPB7</label>
    </interactant>
    <organismsDiffer>false</organismsDiffer>
    <experiments>3</experiments>
</comment>
<comment type="interaction">
    <interactant intactId="EBI-11139477">
        <id>Q96N21</id>
    </interactant>
    <interactant intactId="EBI-17178971">
        <id>Q14005-2</id>
        <label>IL16</label>
    </interactant>
    <organismsDiffer>false</organismsDiffer>
    <experiments>3</experiments>
</comment>
<comment type="interaction">
    <interactant intactId="EBI-11139477">
        <id>Q96N21</id>
    </interactant>
    <interactant intactId="EBI-297509">
        <id>P46940</id>
        <label>IQGAP1</label>
    </interactant>
    <organismsDiffer>false</organismsDiffer>
    <experiments>3</experiments>
</comment>
<comment type="interaction">
    <interactant intactId="EBI-11139477">
        <id>Q96N21</id>
    </interactant>
    <interactant intactId="EBI-2511344">
        <id>Q8NC69</id>
        <label>KCTD6</label>
    </interactant>
    <organismsDiffer>false</organismsDiffer>
    <experiments>3</experiments>
</comment>
<comment type="interaction">
    <interactant intactId="EBI-11139477">
        <id>Q96N21</id>
    </interactant>
    <interactant intactId="EBI-4397613">
        <id>Q7L273</id>
        <label>KCTD9</label>
    </interactant>
    <organismsDiffer>false</organismsDiffer>
    <experiments>3</experiments>
</comment>
<comment type="interaction">
    <interactant intactId="EBI-11139477">
        <id>Q96N21</id>
    </interactant>
    <interactant intactId="EBI-6148525">
        <id>O15037</id>
        <label>KHNYN</label>
    </interactant>
    <organismsDiffer>false</organismsDiffer>
    <experiments>3</experiments>
</comment>
<comment type="interaction">
    <interactant intactId="EBI-11139477">
        <id>Q96N21</id>
    </interactant>
    <interactant intactId="EBI-6426443">
        <id>Q2WGJ6</id>
        <label>KLHL38</label>
    </interactant>
    <organismsDiffer>false</organismsDiffer>
    <experiments>3</experiments>
</comment>
<comment type="interaction">
    <interactant intactId="EBI-11139477">
        <id>Q96N21</id>
    </interactant>
    <interactant intactId="EBI-948001">
        <id>Q15323</id>
        <label>KRT31</label>
    </interactant>
    <organismsDiffer>false</organismsDiffer>
    <experiments>3</experiments>
</comment>
<comment type="interaction">
    <interactant intactId="EBI-11139477">
        <id>Q96N21</id>
    </interactant>
    <interactant intactId="EBI-1047093">
        <id>O76011</id>
        <label>KRT34</label>
    </interactant>
    <organismsDiffer>false</organismsDiffer>
    <experiments>3</experiments>
</comment>
<comment type="interaction">
    <interactant intactId="EBI-11139477">
        <id>Q96N21</id>
    </interactant>
    <interactant intactId="EBI-1058674">
        <id>Q92764</id>
        <label>KRT35</label>
    </interactant>
    <organismsDiffer>false</organismsDiffer>
    <experiments>3</experiments>
</comment>
<comment type="interaction">
    <interactant intactId="EBI-11139477">
        <id>Q96N21</id>
    </interactant>
    <interactant intactId="EBI-11962084">
        <id>Q3LI66</id>
        <label>KRTAP6-2</label>
    </interactant>
    <organismsDiffer>false</organismsDiffer>
    <experiments>3</experiments>
</comment>
<comment type="interaction">
    <interactant intactId="EBI-11139477">
        <id>Q96N21</id>
    </interactant>
    <interactant intactId="EBI-726510">
        <id>Q96BZ8</id>
        <label>LENG1</label>
    </interactant>
    <organismsDiffer>false</organismsDiffer>
    <experiments>3</experiments>
</comment>
<comment type="interaction">
    <interactant intactId="EBI-11139477">
        <id>Q96N21</id>
    </interactant>
    <interactant intactId="EBI-10274069">
        <id>Q8TCE9</id>
        <label>LGALS14</label>
    </interactant>
    <organismsDiffer>false</organismsDiffer>
    <experiments>3</experiments>
</comment>
<comment type="interaction">
    <interactant intactId="EBI-11139477">
        <id>Q96N21</id>
    </interactant>
    <interactant intactId="EBI-11742507">
        <id>Q8TAP4-4</id>
        <label>LMO3</label>
    </interactant>
    <organismsDiffer>false</organismsDiffer>
    <experiments>3</experiments>
</comment>
<comment type="interaction">
    <interactant intactId="EBI-11139477">
        <id>Q96N21</id>
    </interactant>
    <interactant intactId="EBI-348239">
        <id>P62310</id>
        <label>LSM3</label>
    </interactant>
    <organismsDiffer>false</organismsDiffer>
    <experiments>3</experiments>
</comment>
<comment type="interaction">
    <interactant intactId="EBI-11139477">
        <id>Q96N21</id>
    </interactant>
    <interactant intactId="EBI-18312334">
        <id>Q86SG7</id>
        <label>LYG2</label>
    </interactant>
    <organismsDiffer>false</organismsDiffer>
    <experiments>3</experiments>
</comment>
<comment type="interaction">
    <interactant intactId="EBI-11139477">
        <id>Q96N21</id>
    </interactant>
    <interactant intactId="EBI-10317491">
        <id>Q9NZL9</id>
        <label>MAT2B</label>
    </interactant>
    <organismsDiffer>false</organismsDiffer>
    <experiments>3</experiments>
</comment>
<comment type="interaction">
    <interactant intactId="EBI-11139477">
        <id>Q96N21</id>
    </interactant>
    <interactant intactId="EBI-394640">
        <id>Q9BUE0</id>
        <label>MED18</label>
    </interactant>
    <organismsDiffer>false</organismsDiffer>
    <experiments>3</experiments>
</comment>
<comment type="interaction">
    <interactant intactId="EBI-11139477">
        <id>Q96N21</id>
    </interactant>
    <interactant intactId="EBI-1048159">
        <id>P55081</id>
        <label>MFAP1</label>
    </interactant>
    <organismsDiffer>false</organismsDiffer>
    <experiments>3</experiments>
</comment>
<comment type="interaction">
    <interactant intactId="EBI-11139477">
        <id>Q96N21</id>
    </interactant>
    <interactant intactId="EBI-8852072">
        <id>Q9UH92-3</id>
        <label>MLX</label>
    </interactant>
    <organismsDiffer>false</organismsDiffer>
    <experiments>3</experiments>
</comment>
<comment type="interaction">
    <interactant intactId="EBI-11139477">
        <id>Q96N21</id>
    </interactant>
    <interactant intactId="EBI-10288852">
        <id>Q9UBU8-2</id>
        <label>MORF4L1</label>
    </interactant>
    <organismsDiffer>false</organismsDiffer>
    <experiments>3</experiments>
</comment>
<comment type="interaction">
    <interactant intactId="EBI-11139477">
        <id>Q96N21</id>
    </interactant>
    <interactant intactId="EBI-11991020">
        <id>A6NI15</id>
        <label>MSGN1</label>
    </interactant>
    <organismsDiffer>false</organismsDiffer>
    <experiments>3</experiments>
</comment>
<comment type="interaction">
    <interactant intactId="EBI-11139477">
        <id>Q96N21</id>
    </interactant>
    <interactant intactId="EBI-11522433">
        <id>Q5JR59-3</id>
        <label>MTUS2</label>
    </interactant>
    <organismsDiffer>false</organismsDiffer>
    <experiments>3</experiments>
</comment>
<comment type="interaction">
    <interactant intactId="EBI-11139477">
        <id>Q96N21</id>
    </interactant>
    <interactant intactId="EBI-10249760">
        <id>Q9UHB4</id>
        <label>NDOR1</label>
    </interactant>
    <organismsDiffer>false</organismsDiffer>
    <experiments>3</experiments>
</comment>
<comment type="interaction">
    <interactant intactId="EBI-11139477">
        <id>Q96N21</id>
    </interactant>
    <interactant intactId="EBI-11750983">
        <id>Q9HC98-4</id>
        <label>NEK6</label>
    </interactant>
    <organismsDiffer>false</organismsDiffer>
    <experiments>3</experiments>
</comment>
<comment type="interaction">
    <interactant intactId="EBI-11139477">
        <id>Q96N21</id>
    </interactant>
    <interactant intactId="EBI-10311409">
        <id>Q9NPG2</id>
        <label>NGB</label>
    </interactant>
    <organismsDiffer>false</organismsDiffer>
    <experiments>3</experiments>
</comment>
<comment type="interaction">
    <interactant intactId="EBI-11139477">
        <id>Q96N21</id>
    </interactant>
    <interactant intactId="EBI-744782">
        <id>Q9Y5B8</id>
        <label>NME7</label>
    </interactant>
    <organismsDiffer>false</organismsDiffer>
    <experiments>3</experiments>
</comment>
<comment type="interaction">
    <interactant intactId="EBI-11139477">
        <id>Q96N21</id>
    </interactant>
    <interactant intactId="EBI-10260040">
        <id>Q86WQ0</id>
        <label>NR2C2AP</label>
    </interactant>
    <organismsDiffer>false</organismsDiffer>
    <experiments>3</experiments>
</comment>
<comment type="interaction">
    <interactant intactId="EBI-11139477">
        <id>Q96N21</id>
    </interactant>
    <interactant intactId="EBI-741158">
        <id>Q96HA8</id>
        <label>NTAQ1</label>
    </interactant>
    <organismsDiffer>false</organismsDiffer>
    <experiments>3</experiments>
</comment>
<comment type="interaction">
    <interactant intactId="EBI-11139477">
        <id>Q96N21</id>
    </interactant>
    <interactant intactId="EBI-536866">
        <id>O95848</id>
        <label>NUDT14</label>
    </interactant>
    <organismsDiffer>false</organismsDiffer>
    <experiments>3</experiments>
</comment>
<comment type="interaction">
    <interactant intactId="EBI-11139477">
        <id>Q96N21</id>
    </interactant>
    <interactant intactId="EBI-355720">
        <id>O43809</id>
        <label>NUDT21</label>
    </interactant>
    <organismsDiffer>false</organismsDiffer>
    <experiments>3</experiments>
</comment>
<comment type="interaction">
    <interactant intactId="EBI-11139477">
        <id>Q96N21</id>
    </interactant>
    <interactant intactId="EBI-12049527">
        <id>Q9UMX2-2</id>
        <label>OAZ3</label>
    </interactant>
    <organismsDiffer>false</organismsDiffer>
    <experiments>3</experiments>
</comment>
<comment type="interaction">
    <interactant intactId="EBI-11139477">
        <id>Q96N21</id>
    </interactant>
    <interactant intactId="EBI-12176191">
        <id>O95007</id>
        <label>OR6B1</label>
    </interactant>
    <organismsDiffer>false</organismsDiffer>
    <experiments>3</experiments>
</comment>
<comment type="interaction">
    <interactant intactId="EBI-11139477">
        <id>Q96N21</id>
    </interactant>
    <interactant intactId="EBI-12111000">
        <id>P55771</id>
        <label>PAX9</label>
    </interactant>
    <organismsDiffer>false</organismsDiffer>
    <experiments>3</experiments>
</comment>
<comment type="interaction">
    <interactant intactId="EBI-11139477">
        <id>Q96N21</id>
    </interactant>
    <interactant intactId="EBI-24224850">
        <id>Q9Y5E6</id>
        <label>PCDHB3</label>
    </interactant>
    <organismsDiffer>false</organismsDiffer>
    <experiments>3</experiments>
</comment>
<comment type="interaction">
    <interactant intactId="EBI-11139477">
        <id>Q96N21</id>
    </interactant>
    <interactant intactId="EBI-4401947">
        <id>Q9HB19</id>
        <label>PLEKHA2</label>
    </interactant>
    <organismsDiffer>false</organismsDiffer>
    <experiments>3</experiments>
</comment>
<comment type="interaction">
    <interactant intactId="EBI-11139477">
        <id>Q96N21</id>
    </interactant>
    <interactant intactId="EBI-357793">
        <id>P60900</id>
        <label>PSMA6</label>
    </interactant>
    <organismsDiffer>false</organismsDiffer>
    <experiments>3</experiments>
</comment>
<comment type="interaction">
    <interactant intactId="EBI-11139477">
        <id>Q96N21</id>
    </interactant>
    <interactant intactId="EBI-11984839">
        <id>Q96QF0-7</id>
        <label>RAB3IP</label>
    </interactant>
    <organismsDiffer>false</organismsDiffer>
    <experiments>3</experiments>
</comment>
<comment type="interaction">
    <interactant intactId="EBI-11139477">
        <id>Q96N21</id>
    </interactant>
    <interactant intactId="EBI-1055693">
        <id>O75771</id>
        <label>RAD51D</label>
    </interactant>
    <organismsDiffer>false</organismsDiffer>
    <experiments>3</experiments>
</comment>
<comment type="interaction">
    <interactant intactId="EBI-11139477">
        <id>Q96N21</id>
    </interactant>
    <interactant intactId="EBI-9916363">
        <id>Q8IUD6</id>
        <label>RNF135</label>
    </interactant>
    <organismsDiffer>false</organismsDiffer>
    <experiments>3</experiments>
</comment>
<comment type="interaction">
    <interactant intactId="EBI-11139477">
        <id>Q96N21</id>
    </interactant>
    <interactant intactId="EBI-10320311">
        <id>Q9UDX3</id>
        <label>SEC14L4</label>
    </interactant>
    <organismsDiffer>false</organismsDiffer>
    <experiments>3</experiments>
</comment>
<comment type="interaction">
    <interactant intactId="EBI-11139477">
        <id>Q96N21</id>
    </interactant>
    <interactant intactId="EBI-750559">
        <id>O95391</id>
        <label>SLU7</label>
    </interactant>
    <organismsDiffer>false</organismsDiffer>
    <experiments>3</experiments>
</comment>
<comment type="interaction">
    <interactant intactId="EBI-11139477">
        <id>Q96N21</id>
    </interactant>
    <interactant intactId="EBI-9675976">
        <id>Q9BV90</id>
        <label>SNRNP25</label>
    </interactant>
    <organismsDiffer>false</organismsDiffer>
    <experiments>3</experiments>
</comment>
<comment type="interaction">
    <interactant intactId="EBI-11139477">
        <id>Q96N21</id>
    </interactant>
    <interactant intactId="EBI-12037893">
        <id>O94875-10</id>
        <label>SORBS2</label>
    </interactant>
    <organismsDiffer>false</organismsDiffer>
    <experiments>3</experiments>
</comment>
<comment type="interaction">
    <interactant intactId="EBI-11139477">
        <id>Q96N21</id>
    </interactant>
    <interactant intactId="EBI-741237">
        <id>O60504</id>
        <label>SORBS3</label>
    </interactant>
    <organismsDiffer>false</organismsDiffer>
    <experiments>3</experiments>
</comment>
<comment type="interaction">
    <interactant intactId="EBI-11139477">
        <id>Q96N21</id>
    </interactant>
    <interactant intactId="EBI-10245139">
        <id>Q5T011-5</id>
        <label>SZT2</label>
    </interactant>
    <organismsDiffer>false</organismsDiffer>
    <experiments>3</experiments>
</comment>
<comment type="interaction">
    <interactant intactId="EBI-11139477">
        <id>Q96N21</id>
    </interactant>
    <interactant intactId="EBI-12017416">
        <id>Q9BX59</id>
        <label>TAPBPL</label>
    </interactant>
    <organismsDiffer>false</organismsDiffer>
    <experiments>3</experiments>
</comment>
<comment type="interaction">
    <interactant intactId="EBI-11139477">
        <id>Q96N21</id>
    </interactant>
    <interactant intactId="EBI-12264956">
        <id>Q9NVG8</id>
        <label>TBC1D13</label>
    </interactant>
    <organismsDiffer>false</organismsDiffer>
    <experiments>3</experiments>
</comment>
<comment type="interaction">
    <interactant intactId="EBI-11139477">
        <id>Q96N21</id>
    </interactant>
    <interactant intactId="EBI-8787464">
        <id>Q9NU19</id>
        <label>TBC1D22B</label>
    </interactant>
    <organismsDiffer>false</organismsDiffer>
    <experiments>3</experiments>
</comment>
<comment type="interaction">
    <interactant intactId="EBI-11139477">
        <id>Q96N21</id>
    </interactant>
    <interactant intactId="EBI-710310">
        <id>Q15560</id>
        <label>TCEA2</label>
    </interactant>
    <organismsDiffer>false</organismsDiffer>
    <experiments>3</experiments>
</comment>
<comment type="interaction">
    <interactant intactId="EBI-11139477">
        <id>Q96N21</id>
    </interactant>
    <interactant intactId="EBI-749995">
        <id>P56279</id>
        <label>TCL1A</label>
    </interactant>
    <organismsDiffer>false</organismsDiffer>
    <experiments>3</experiments>
</comment>
<comment type="interaction">
    <interactant intactId="EBI-11139477">
        <id>Q96N21</id>
    </interactant>
    <interactant intactId="EBI-11952651">
        <id>Q7Z6R9</id>
        <label>TFAP2D</label>
    </interactant>
    <organismsDiffer>false</organismsDiffer>
    <experiments>3</experiments>
</comment>
<comment type="interaction">
    <interactant intactId="EBI-11139477">
        <id>Q96N21</id>
    </interactant>
    <interactant intactId="EBI-1749955">
        <id>Q92748</id>
        <label>THRSP</label>
    </interactant>
    <organismsDiffer>false</organismsDiffer>
    <experiments>3</experiments>
</comment>
<comment type="interaction">
    <interactant intactId="EBI-11139477">
        <id>Q96N21</id>
    </interactant>
    <interactant intactId="EBI-11961968">
        <id>P0DI81-3</id>
        <label>TRAPPC2</label>
    </interactant>
    <organismsDiffer>false</organismsDiffer>
    <experiments>3</experiments>
</comment>
<comment type="interaction">
    <interactant intactId="EBI-11139477">
        <id>Q96N21</id>
    </interactant>
    <interactant intactId="EBI-8451480">
        <id>O75865-2</id>
        <label>TRAPPC6A</label>
    </interactant>
    <organismsDiffer>false</organismsDiffer>
    <experiments>3</experiments>
</comment>
<comment type="interaction">
    <interactant intactId="EBI-11139477">
        <id>Q96N21</id>
    </interactant>
    <interactant intactId="EBI-740098">
        <id>P36406</id>
        <label>TRIM23</label>
    </interactant>
    <organismsDiffer>false</organismsDiffer>
    <experiments>3</experiments>
</comment>
<comment type="interaction">
    <interactant intactId="EBI-11139477">
        <id>Q96N21</id>
    </interactant>
    <interactant intactId="EBI-11993364">
        <id>Q9H8W5-2</id>
        <label>TRIM45</label>
    </interactant>
    <organismsDiffer>false</organismsDiffer>
    <experiments>3</experiments>
</comment>
<comment type="interaction">
    <interactant intactId="EBI-11139477">
        <id>Q96N21</id>
    </interactant>
    <interactant intactId="EBI-9867283">
        <id>Q86XT4</id>
        <label>TRIM50</label>
    </interactant>
    <organismsDiffer>false</organismsDiffer>
    <experiments>3</experiments>
</comment>
<comment type="interaction">
    <interactant intactId="EBI-11139477">
        <id>Q96N21</id>
    </interactant>
    <interactant intactId="EBI-2130429">
        <id>Q9BYV2</id>
        <label>TRIM54</label>
    </interactant>
    <organismsDiffer>false</organismsDiffer>
    <experiments>3</experiments>
</comment>
<comment type="interaction">
    <interactant intactId="EBI-11139477">
        <id>Q96N21</id>
    </interactant>
    <interactant intactId="EBI-2130449">
        <id>Q6AZZ1</id>
        <label>TRIM68</label>
    </interactant>
    <organismsDiffer>false</organismsDiffer>
    <experiments>3</experiments>
</comment>
<comment type="interaction">
    <interactant intactId="EBI-11139477">
        <id>Q96N21</id>
    </interactant>
    <interactant intactId="EBI-372432">
        <id>Q8WW01</id>
        <label>TSEN15</label>
    </interactant>
    <organismsDiffer>false</organismsDiffer>
    <experiments>3</experiments>
</comment>
<comment type="interaction">
    <interactant intactId="EBI-11139477">
        <id>Q96N21</id>
    </interactant>
    <interactant intactId="EBI-2559818">
        <id>Q8NCE0</id>
        <label>TSEN2</label>
    </interactant>
    <organismsDiffer>false</organismsDiffer>
    <experiments>3</experiments>
</comment>
<comment type="interaction">
    <interactant intactId="EBI-11139477">
        <id>Q96N21</id>
    </interactant>
    <interactant intactId="EBI-9053916">
        <id>Q63HK5</id>
        <label>TSHZ3</label>
    </interactant>
    <organismsDiffer>false</organismsDiffer>
    <experiments>3</experiments>
</comment>
<comment type="interaction">
    <interactant intactId="EBI-11139477">
        <id>Q96N21</id>
    </interactant>
    <interactant intactId="EBI-3918381">
        <id>Q96PN8</id>
        <label>TSSK3</label>
    </interactant>
    <organismsDiffer>false</organismsDiffer>
    <experiments>3</experiments>
</comment>
<comment type="interaction">
    <interactant intactId="EBI-11139477">
        <id>Q96N21</id>
    </interactant>
    <interactant intactId="EBI-1380492">
        <id>Q8TF42</id>
        <label>UBASH3B</label>
    </interactant>
    <organismsDiffer>false</organismsDiffer>
    <experiments>3</experiments>
</comment>
<comment type="interaction">
    <interactant intactId="EBI-11139477">
        <id>Q96N21</id>
    </interactant>
    <interactant intactId="EBI-5457544">
        <id>Q9BRU9</id>
        <label>UTP23</label>
    </interactant>
    <organismsDiffer>false</organismsDiffer>
    <experiments>3</experiments>
</comment>
<comment type="interaction">
    <interactant intactId="EBI-11139477">
        <id>Q96N21</id>
    </interactant>
    <interactant intactId="EBI-7207091">
        <id>O14972</id>
        <label>VPS26C</label>
    </interactant>
    <organismsDiffer>false</organismsDiffer>
    <experiments>3</experiments>
</comment>
<comment type="interaction">
    <interactant intactId="EBI-11139477">
        <id>Q96N21</id>
    </interactant>
    <interactant intactId="EBI-12032042">
        <id>Q64LD2-2</id>
        <label>WDR25</label>
    </interactant>
    <organismsDiffer>false</organismsDiffer>
    <experiments>3</experiments>
</comment>
<comment type="interaction">
    <interactant intactId="EBI-11139477">
        <id>Q96N21</id>
    </interactant>
    <interactant intactId="EBI-11963196">
        <id>Q15915</id>
        <label>ZIC1</label>
    </interactant>
    <organismsDiffer>false</organismsDiffer>
    <experiments>3</experiments>
</comment>
<comment type="interaction">
    <interactant intactId="EBI-11139477">
        <id>Q96N21</id>
    </interactant>
    <interactant intactId="EBI-12030590">
        <id>Q9H0C1</id>
        <label>ZMYND12</label>
    </interactant>
    <organismsDiffer>false</organismsDiffer>
    <experiments>3</experiments>
</comment>
<comment type="interaction">
    <interactant intactId="EBI-11139477">
        <id>Q96N21</id>
    </interactant>
    <interactant intactId="EBI-10252492">
        <id>Q6P1L6</id>
        <label>ZNF343</label>
    </interactant>
    <organismsDiffer>false</organismsDiffer>
    <experiments>3</experiments>
</comment>
<comment type="interaction">
    <interactant intactId="EBI-11139477">
        <id>Q96N21</id>
    </interactant>
    <interactant intactId="EBI-9977294">
        <id>Q9UEG4</id>
        <label>ZNF629</label>
    </interactant>
    <organismsDiffer>false</organismsDiffer>
    <experiments>3</experiments>
</comment>
<comment type="interaction">
    <interactant intactId="EBI-11139477">
        <id>Q96N21</id>
    </interactant>
    <interactant intactId="EBI-6657923">
        <id>Q15696</id>
        <label>ZRSR2</label>
    </interactant>
    <organismsDiffer>false</organismsDiffer>
    <experiments>3</experiments>
</comment>
<comment type="interaction">
    <interactant intactId="EBI-11139477">
        <id>Q96N21</id>
    </interactant>
    <interactant intactId="EBI-10211777">
        <id>A0A384ME25</id>
    </interactant>
    <organismsDiffer>false</organismsDiffer>
    <experiments>3</experiments>
</comment>
<comment type="subcellular location">
    <subcellularLocation>
        <location evidence="3 4">Golgi apparatus</location>
        <location evidence="3 4">trans-Golgi network membrane</location>
        <topology evidence="4">Peripheral membrane protein</topology>
    </subcellularLocation>
    <subcellularLocation>
        <location evidence="2">Cytoplasmic vesicle</location>
    </subcellularLocation>
    <subcellularLocation>
        <location evidence="2">Cytoplasm</location>
        <location evidence="2">Cytosol</location>
    </subcellularLocation>
    <text evidence="2 3">Extensively colocalizes with AP-4 which mediates the recruitment of TEPSIN to the trans-Golgi network.</text>
</comment>
<comment type="alternative products">
    <event type="alternative splicing"/>
    <isoform>
        <id>Q96N21-1</id>
        <name>1</name>
        <sequence type="displayed"/>
    </isoform>
    <isoform>
        <id>Q96N21-2</id>
        <name>2</name>
        <sequence type="described" ref="VSP_025141 VSP_025142"/>
    </isoform>
</comment>
<accession>Q96N21</accession>
<accession>Q6ZQU0</accession>
<accession>Q6ZSQ9</accession>
<name>AP4AT_HUMAN</name>
<proteinExistence type="evidence at protein level"/>